<sequence length="177" mass="19864">MLDTIVLGGGCFWCVESVFLSVVGVKEVESGYAGGNTKNPDYRSICSGKTGHAEVVKVSFDTEKISLSQILEIFFATHDPTTPNRQGNDVGTQYRSVVMCHSQEQKDIAQEVISTLGNNGTFENPIVTEVVDLKDYYRAEEYHQNYFNKNPYQPYCVFSIPPKLQKLKKYFPDQVSA</sequence>
<evidence type="ECO:0000255" key="1">
    <source>
        <dbReference type="HAMAP-Rule" id="MF_01401"/>
    </source>
</evidence>
<comment type="function">
    <text evidence="1">Has an important function as a repair enzyme for proteins that have been inactivated by oxidation. Catalyzes the reversible oxidation-reduction of methionine sulfoxide in proteins to methionine.</text>
</comment>
<comment type="catalytic activity">
    <reaction evidence="1">
        <text>L-methionyl-[protein] + [thioredoxin]-disulfide + H2O = L-methionyl-(S)-S-oxide-[protein] + [thioredoxin]-dithiol</text>
        <dbReference type="Rhea" id="RHEA:14217"/>
        <dbReference type="Rhea" id="RHEA-COMP:10698"/>
        <dbReference type="Rhea" id="RHEA-COMP:10700"/>
        <dbReference type="Rhea" id="RHEA-COMP:12313"/>
        <dbReference type="Rhea" id="RHEA-COMP:12315"/>
        <dbReference type="ChEBI" id="CHEBI:15377"/>
        <dbReference type="ChEBI" id="CHEBI:16044"/>
        <dbReference type="ChEBI" id="CHEBI:29950"/>
        <dbReference type="ChEBI" id="CHEBI:44120"/>
        <dbReference type="ChEBI" id="CHEBI:50058"/>
        <dbReference type="EC" id="1.8.4.11"/>
    </reaction>
</comment>
<comment type="catalytic activity">
    <reaction evidence="1">
        <text>[thioredoxin]-disulfide + L-methionine + H2O = L-methionine (S)-S-oxide + [thioredoxin]-dithiol</text>
        <dbReference type="Rhea" id="RHEA:19993"/>
        <dbReference type="Rhea" id="RHEA-COMP:10698"/>
        <dbReference type="Rhea" id="RHEA-COMP:10700"/>
        <dbReference type="ChEBI" id="CHEBI:15377"/>
        <dbReference type="ChEBI" id="CHEBI:29950"/>
        <dbReference type="ChEBI" id="CHEBI:50058"/>
        <dbReference type="ChEBI" id="CHEBI:57844"/>
        <dbReference type="ChEBI" id="CHEBI:58772"/>
        <dbReference type="EC" id="1.8.4.11"/>
    </reaction>
</comment>
<comment type="similarity">
    <text evidence="1">Belongs to the MsrA Met sulfoxide reductase family.</text>
</comment>
<organism>
    <name type="scientific">Trichodesmium erythraeum (strain IMS101)</name>
    <dbReference type="NCBI Taxonomy" id="203124"/>
    <lineage>
        <taxon>Bacteria</taxon>
        <taxon>Bacillati</taxon>
        <taxon>Cyanobacteriota</taxon>
        <taxon>Cyanophyceae</taxon>
        <taxon>Oscillatoriophycideae</taxon>
        <taxon>Oscillatoriales</taxon>
        <taxon>Microcoleaceae</taxon>
        <taxon>Trichodesmium</taxon>
    </lineage>
</organism>
<feature type="chain" id="PRO_1000087360" description="Peptide methionine sulfoxide reductase MsrA">
    <location>
        <begin position="1"/>
        <end position="177"/>
    </location>
</feature>
<feature type="active site" evidence="1">
    <location>
        <position position="11"/>
    </location>
</feature>
<name>MSRA_TRIEI</name>
<keyword id="KW-0560">Oxidoreductase</keyword>
<accession>Q119G2</accession>
<proteinExistence type="inferred from homology"/>
<protein>
    <recommendedName>
        <fullName evidence="1">Peptide methionine sulfoxide reductase MsrA</fullName>
        <shortName evidence="1">Protein-methionine-S-oxide reductase</shortName>
        <ecNumber evidence="1">1.8.4.11</ecNumber>
    </recommendedName>
    <alternativeName>
        <fullName evidence="1">Peptide-methionine (S)-S-oxide reductase</fullName>
        <shortName evidence="1">Peptide Met(O) reductase</shortName>
    </alternativeName>
</protein>
<gene>
    <name evidence="1" type="primary">msrA</name>
    <name type="ordered locus">Tery_0394</name>
</gene>
<reference key="1">
    <citation type="journal article" date="2015" name="Proc. Natl. Acad. Sci. U.S.A.">
        <title>Trichodesmium genome maintains abundant, widespread noncoding DNA in situ, despite oligotrophic lifestyle.</title>
        <authorList>
            <person name="Walworth N."/>
            <person name="Pfreundt U."/>
            <person name="Nelson W.C."/>
            <person name="Mincer T."/>
            <person name="Heidelberg J.F."/>
            <person name="Fu F."/>
            <person name="Waterbury J.B."/>
            <person name="Glavina del Rio T."/>
            <person name="Goodwin L."/>
            <person name="Kyrpides N.C."/>
            <person name="Land M.L."/>
            <person name="Woyke T."/>
            <person name="Hutchins D.A."/>
            <person name="Hess W.R."/>
            <person name="Webb E.A."/>
        </authorList>
    </citation>
    <scope>NUCLEOTIDE SEQUENCE [LARGE SCALE GENOMIC DNA]</scope>
    <source>
        <strain>IMS101</strain>
    </source>
</reference>
<dbReference type="EC" id="1.8.4.11" evidence="1"/>
<dbReference type="EMBL" id="CP000393">
    <property type="protein sequence ID" value="ABG49862.1"/>
    <property type="molecule type" value="Genomic_DNA"/>
</dbReference>
<dbReference type="RefSeq" id="WP_011610258.1">
    <property type="nucleotide sequence ID" value="NC_008312.1"/>
</dbReference>
<dbReference type="SMR" id="Q119G2"/>
<dbReference type="STRING" id="203124.Tery_0394"/>
<dbReference type="KEGG" id="ter:Tery_0394"/>
<dbReference type="eggNOG" id="COG0225">
    <property type="taxonomic scope" value="Bacteria"/>
</dbReference>
<dbReference type="HOGENOM" id="CLU_031040_10_0_3"/>
<dbReference type="OrthoDB" id="4174719at2"/>
<dbReference type="GO" id="GO:0033744">
    <property type="term" value="F:L-methionine:thioredoxin-disulfide S-oxidoreductase activity"/>
    <property type="evidence" value="ECO:0007669"/>
    <property type="project" value="RHEA"/>
</dbReference>
<dbReference type="GO" id="GO:0008113">
    <property type="term" value="F:peptide-methionine (S)-S-oxide reductase activity"/>
    <property type="evidence" value="ECO:0007669"/>
    <property type="project" value="UniProtKB-UniRule"/>
</dbReference>
<dbReference type="GO" id="GO:0036211">
    <property type="term" value="P:protein modification process"/>
    <property type="evidence" value="ECO:0007669"/>
    <property type="project" value="UniProtKB-UniRule"/>
</dbReference>
<dbReference type="Gene3D" id="3.30.1060.10">
    <property type="entry name" value="Peptide methionine sulphoxide reductase MsrA"/>
    <property type="match status" value="1"/>
</dbReference>
<dbReference type="HAMAP" id="MF_01401">
    <property type="entry name" value="MsrA"/>
    <property type="match status" value="1"/>
</dbReference>
<dbReference type="InterPro" id="IPR002569">
    <property type="entry name" value="Met_Sox_Rdtase_MsrA_dom"/>
</dbReference>
<dbReference type="InterPro" id="IPR036509">
    <property type="entry name" value="Met_Sox_Rdtase_MsrA_sf"/>
</dbReference>
<dbReference type="NCBIfam" id="TIGR00401">
    <property type="entry name" value="msrA"/>
    <property type="match status" value="1"/>
</dbReference>
<dbReference type="PANTHER" id="PTHR43774">
    <property type="entry name" value="PEPTIDE METHIONINE SULFOXIDE REDUCTASE"/>
    <property type="match status" value="1"/>
</dbReference>
<dbReference type="PANTHER" id="PTHR43774:SF1">
    <property type="entry name" value="PEPTIDE METHIONINE SULFOXIDE REDUCTASE MSRA 2"/>
    <property type="match status" value="1"/>
</dbReference>
<dbReference type="Pfam" id="PF01625">
    <property type="entry name" value="PMSR"/>
    <property type="match status" value="1"/>
</dbReference>
<dbReference type="SUPFAM" id="SSF55068">
    <property type="entry name" value="Peptide methionine sulfoxide reductase"/>
    <property type="match status" value="1"/>
</dbReference>